<feature type="signal peptide" evidence="1">
    <location>
        <begin position="1"/>
        <end position="25"/>
    </location>
</feature>
<feature type="chain" id="PRO_0000270050" description="Chaperone SurA">
    <location>
        <begin position="26"/>
        <end position="463"/>
    </location>
</feature>
<feature type="domain" description="PpiC 1" evidence="1">
    <location>
        <begin position="174"/>
        <end position="276"/>
    </location>
</feature>
<feature type="domain" description="PpiC 2" evidence="1">
    <location>
        <begin position="289"/>
        <end position="388"/>
    </location>
</feature>
<feature type="region of interest" description="Disordered" evidence="2">
    <location>
        <begin position="329"/>
        <end position="348"/>
    </location>
</feature>
<feature type="region of interest" description="Disordered" evidence="2">
    <location>
        <begin position="434"/>
        <end position="463"/>
    </location>
</feature>
<feature type="compositionally biased region" description="Low complexity" evidence="2">
    <location>
        <begin position="440"/>
        <end position="452"/>
    </location>
</feature>
<feature type="compositionally biased region" description="Pro residues" evidence="2">
    <location>
        <begin position="453"/>
        <end position="463"/>
    </location>
</feature>
<organism>
    <name type="scientific">Xanthomonas campestris pv. campestris (strain 8004)</name>
    <dbReference type="NCBI Taxonomy" id="314565"/>
    <lineage>
        <taxon>Bacteria</taxon>
        <taxon>Pseudomonadati</taxon>
        <taxon>Pseudomonadota</taxon>
        <taxon>Gammaproteobacteria</taxon>
        <taxon>Lysobacterales</taxon>
        <taxon>Lysobacteraceae</taxon>
        <taxon>Xanthomonas</taxon>
    </lineage>
</organism>
<comment type="function">
    <text evidence="1">Chaperone involved in the correct folding and assembly of outer membrane proteins. Recognizes specific patterns of aromatic residues and the orientation of their side chains, which are found more frequently in integral outer membrane proteins. May act in both early periplasmic and late outer membrane-associated steps of protein maturation.</text>
</comment>
<comment type="catalytic activity">
    <reaction evidence="1">
        <text>[protein]-peptidylproline (omega=180) = [protein]-peptidylproline (omega=0)</text>
        <dbReference type="Rhea" id="RHEA:16237"/>
        <dbReference type="Rhea" id="RHEA-COMP:10747"/>
        <dbReference type="Rhea" id="RHEA-COMP:10748"/>
        <dbReference type="ChEBI" id="CHEBI:83833"/>
        <dbReference type="ChEBI" id="CHEBI:83834"/>
        <dbReference type="EC" id="5.2.1.8"/>
    </reaction>
</comment>
<comment type="subcellular location">
    <subcellularLocation>
        <location evidence="1">Periplasm</location>
    </subcellularLocation>
    <text evidence="1">Is capable of associating with the outer membrane.</text>
</comment>
<comment type="domain">
    <text evidence="1">The PPIase activity resides only in the second parvulin domain. The N-terminal region and the C-terminal tail are necessary and sufficient for the chaperone activity of SurA. The PPIase activity is dispensable for SurA to function as a chaperone. The N-terminal region and the C-terminal tail are also required for porin recognition.</text>
</comment>
<protein>
    <recommendedName>
        <fullName evidence="1">Chaperone SurA</fullName>
    </recommendedName>
    <alternativeName>
        <fullName evidence="1">Peptidyl-prolyl cis-trans isomerase SurA</fullName>
        <shortName evidence="1">PPIase SurA</shortName>
        <ecNumber evidence="1">5.2.1.8</ecNumber>
    </alternativeName>
    <alternativeName>
        <fullName evidence="1">Rotamase SurA</fullName>
    </alternativeName>
</protein>
<evidence type="ECO:0000255" key="1">
    <source>
        <dbReference type="HAMAP-Rule" id="MF_01183"/>
    </source>
</evidence>
<evidence type="ECO:0000256" key="2">
    <source>
        <dbReference type="SAM" id="MobiDB-lite"/>
    </source>
</evidence>
<dbReference type="EC" id="5.2.1.8" evidence="1"/>
<dbReference type="EMBL" id="CP000050">
    <property type="protein sequence ID" value="AAY50482.1"/>
    <property type="molecule type" value="Genomic_DNA"/>
</dbReference>
<dbReference type="RefSeq" id="WP_011036029.1">
    <property type="nucleotide sequence ID" value="NZ_CP155948.1"/>
</dbReference>
<dbReference type="SMR" id="Q4UR41"/>
<dbReference type="KEGG" id="xcb:XC_3438"/>
<dbReference type="HOGENOM" id="CLU_034646_11_0_6"/>
<dbReference type="Proteomes" id="UP000000420">
    <property type="component" value="Chromosome"/>
</dbReference>
<dbReference type="GO" id="GO:0030288">
    <property type="term" value="C:outer membrane-bounded periplasmic space"/>
    <property type="evidence" value="ECO:0007669"/>
    <property type="project" value="InterPro"/>
</dbReference>
<dbReference type="GO" id="GO:0042277">
    <property type="term" value="F:peptide binding"/>
    <property type="evidence" value="ECO:0007669"/>
    <property type="project" value="InterPro"/>
</dbReference>
<dbReference type="GO" id="GO:0003755">
    <property type="term" value="F:peptidyl-prolyl cis-trans isomerase activity"/>
    <property type="evidence" value="ECO:0007669"/>
    <property type="project" value="UniProtKB-UniRule"/>
</dbReference>
<dbReference type="GO" id="GO:0051082">
    <property type="term" value="F:unfolded protein binding"/>
    <property type="evidence" value="ECO:0007669"/>
    <property type="project" value="UniProtKB-UniRule"/>
</dbReference>
<dbReference type="GO" id="GO:0043165">
    <property type="term" value="P:Gram-negative-bacterium-type cell outer membrane assembly"/>
    <property type="evidence" value="ECO:0007669"/>
    <property type="project" value="InterPro"/>
</dbReference>
<dbReference type="GO" id="GO:0006457">
    <property type="term" value="P:protein folding"/>
    <property type="evidence" value="ECO:0007669"/>
    <property type="project" value="UniProtKB-UniRule"/>
</dbReference>
<dbReference type="GO" id="GO:0050821">
    <property type="term" value="P:protein stabilization"/>
    <property type="evidence" value="ECO:0007669"/>
    <property type="project" value="InterPro"/>
</dbReference>
<dbReference type="Gene3D" id="3.10.50.40">
    <property type="match status" value="2"/>
</dbReference>
<dbReference type="Gene3D" id="1.10.4030.10">
    <property type="entry name" value="Porin chaperone SurA, peptide-binding domain"/>
    <property type="match status" value="1"/>
</dbReference>
<dbReference type="HAMAP" id="MF_01183">
    <property type="entry name" value="Chaperone_SurA"/>
    <property type="match status" value="1"/>
</dbReference>
<dbReference type="InterPro" id="IPR050280">
    <property type="entry name" value="OMP_Chaperone_SurA"/>
</dbReference>
<dbReference type="InterPro" id="IPR046357">
    <property type="entry name" value="PPIase_dom_sf"/>
</dbReference>
<dbReference type="InterPro" id="IPR000297">
    <property type="entry name" value="PPIase_PpiC"/>
</dbReference>
<dbReference type="InterPro" id="IPR023034">
    <property type="entry name" value="PPIase_SurA"/>
</dbReference>
<dbReference type="InterPro" id="IPR015391">
    <property type="entry name" value="SurA_N"/>
</dbReference>
<dbReference type="InterPro" id="IPR027304">
    <property type="entry name" value="Trigger_fact/SurA_dom_sf"/>
</dbReference>
<dbReference type="PANTHER" id="PTHR47637">
    <property type="entry name" value="CHAPERONE SURA"/>
    <property type="match status" value="1"/>
</dbReference>
<dbReference type="PANTHER" id="PTHR47637:SF1">
    <property type="entry name" value="CHAPERONE SURA"/>
    <property type="match status" value="1"/>
</dbReference>
<dbReference type="Pfam" id="PF00639">
    <property type="entry name" value="Rotamase"/>
    <property type="match status" value="1"/>
</dbReference>
<dbReference type="Pfam" id="PF13616">
    <property type="entry name" value="Rotamase_3"/>
    <property type="match status" value="1"/>
</dbReference>
<dbReference type="Pfam" id="PF09312">
    <property type="entry name" value="SurA_N"/>
    <property type="match status" value="1"/>
</dbReference>
<dbReference type="SUPFAM" id="SSF54534">
    <property type="entry name" value="FKBP-like"/>
    <property type="match status" value="2"/>
</dbReference>
<dbReference type="SUPFAM" id="SSF109998">
    <property type="entry name" value="Triger factor/SurA peptide-binding domain-like"/>
    <property type="match status" value="1"/>
</dbReference>
<dbReference type="PROSITE" id="PS50198">
    <property type="entry name" value="PPIC_PPIASE_2"/>
    <property type="match status" value="2"/>
</dbReference>
<name>SURA_XANC8</name>
<keyword id="KW-0143">Chaperone</keyword>
<keyword id="KW-0413">Isomerase</keyword>
<keyword id="KW-0574">Periplasm</keyword>
<keyword id="KW-0677">Repeat</keyword>
<keyword id="KW-0697">Rotamase</keyword>
<keyword id="KW-0732">Signal</keyword>
<gene>
    <name evidence="1" type="primary">surA</name>
    <name type="ordered locus">XC_3438</name>
</gene>
<reference key="1">
    <citation type="journal article" date="2005" name="Genome Res.">
        <title>Comparative and functional genomic analyses of the pathogenicity of phytopathogen Xanthomonas campestris pv. campestris.</title>
        <authorList>
            <person name="Qian W."/>
            <person name="Jia Y."/>
            <person name="Ren S.-X."/>
            <person name="He Y.-Q."/>
            <person name="Feng J.-X."/>
            <person name="Lu L.-F."/>
            <person name="Sun Q."/>
            <person name="Ying G."/>
            <person name="Tang D.-J."/>
            <person name="Tang H."/>
            <person name="Wu W."/>
            <person name="Hao P."/>
            <person name="Wang L."/>
            <person name="Jiang B.-L."/>
            <person name="Zeng S."/>
            <person name="Gu W.-Y."/>
            <person name="Lu G."/>
            <person name="Rong L."/>
            <person name="Tian Y."/>
            <person name="Yao Z."/>
            <person name="Fu G."/>
            <person name="Chen B."/>
            <person name="Fang R."/>
            <person name="Qiang B."/>
            <person name="Chen Z."/>
            <person name="Zhao G.-P."/>
            <person name="Tang J.-L."/>
            <person name="He C."/>
        </authorList>
    </citation>
    <scope>NUCLEOTIDE SEQUENCE [LARGE SCALE GENOMIC DNA]</scope>
    <source>
        <strain>8004</strain>
    </source>
</reference>
<proteinExistence type="inferred from homology"/>
<sequence>MTKPFSVLLASLLVITSTVSPLASAQQSQPLDRIAAIVDEDVVLQSELDRAVRNVKSQYAGRDNQLPPDDVLQRQVLERLVLVKLQVGRAEGSGIRVSDEELNRAIASIAQQNGTSVDGLRQKLAADGMGYADFRASVRDEIIVQRLRQSFAQSRISVSEGEVDTALAQQATTGSQYHLAHILVGLPEGATAEQIATGQKKVDGVKALIDKGELDFSAAAVRYSDSPNALEGGDLGWRSLDEIPNAFAQLIRDMQPGQVAGPLRGPSGFQLLKLVEMRDANAGGEKKVLTEYNARHILVRIGDNQTEAQAKAKIDTLRARIVGGADFQATAKESSEDTNSRGQGGDLGWFPADAFGPDFGKQVEGLTDGAVSEPFRTQAGWHIVQRVGTRQTDVSAENQRAQIRETIGRRKLEEEYNRYLQELRGEAFVSFRTGDRADADATAAPEPAAAPAAPTPPPAQPTR</sequence>
<accession>Q4UR41</accession>